<reference key="1">
    <citation type="journal article" date="2005" name="Nat. Genet.">
        <title>The complete genome sequence of Francisella tularensis, the causative agent of tularemia.</title>
        <authorList>
            <person name="Larsson P."/>
            <person name="Oyston P.C.F."/>
            <person name="Chain P."/>
            <person name="Chu M.C."/>
            <person name="Duffield M."/>
            <person name="Fuxelius H.-H."/>
            <person name="Garcia E."/>
            <person name="Haelltorp G."/>
            <person name="Johansson D."/>
            <person name="Isherwood K.E."/>
            <person name="Karp P.D."/>
            <person name="Larsson E."/>
            <person name="Liu Y."/>
            <person name="Michell S."/>
            <person name="Prior J."/>
            <person name="Prior R."/>
            <person name="Malfatti S."/>
            <person name="Sjoestedt A."/>
            <person name="Svensson K."/>
            <person name="Thompson N."/>
            <person name="Vergez L."/>
            <person name="Wagg J.K."/>
            <person name="Wren B.W."/>
            <person name="Lindler L.E."/>
            <person name="Andersson S.G.E."/>
            <person name="Forsman M."/>
            <person name="Titball R.W."/>
        </authorList>
    </citation>
    <scope>NUCLEOTIDE SEQUENCE [LARGE SCALE GENOMIC DNA]</scope>
    <source>
        <strain>SCHU S4 / Schu 4</strain>
    </source>
</reference>
<keyword id="KW-0067">ATP-binding</keyword>
<keyword id="KW-0963">Cytoplasm</keyword>
<keyword id="KW-0460">Magnesium</keyword>
<keyword id="KW-0479">Metal-binding</keyword>
<keyword id="KW-0547">Nucleotide-binding</keyword>
<keyword id="KW-0554">One-carbon metabolism</keyword>
<keyword id="KW-0630">Potassium</keyword>
<keyword id="KW-1185">Reference proteome</keyword>
<keyword id="KW-0808">Transferase</keyword>
<sequence length="386" mass="42133">MSKNYLFTSESVSEGHPDKLADQISDAILDEILKQDKNARVACETLVKTGMALVAGEITTSAWVDIEELVRNVITETGYDNASKGIDGRTCSVINAIGKQSRDITQGVDRGSLEDLGAGDQGLMFGFATNETPTLMPSAIYYSHLLMRKQAELRKSGKLAWLRPDAKAQVTLAYENDKPKFIDTIVLSTQHNESISQKELHDAVIEEIVKKVIPNELITKDTKYHINPTGVFLIGGPQGDCGLTGRKIIVDTYGGAAHHGGGAFSGKDPSKVDRSGAYMGRYIAKNIVAAGLADKCEVQVAYAIGVAKPVSLMVNTFGTGKITDNQIEKLVAEVFDLRVGKIIENLDLLRPIYRKTSNYGHFGRELPEFTWEKIDKADILKSAARI</sequence>
<protein>
    <recommendedName>
        <fullName evidence="1">S-adenosylmethionine synthase</fullName>
        <shortName evidence="1">AdoMet synthase</shortName>
        <ecNumber evidence="1">2.5.1.6</ecNumber>
    </recommendedName>
    <alternativeName>
        <fullName evidence="1">MAT</fullName>
    </alternativeName>
    <alternativeName>
        <fullName evidence="1">Methionine adenosyltransferase</fullName>
    </alternativeName>
</protein>
<organism>
    <name type="scientific">Francisella tularensis subsp. tularensis (strain SCHU S4 / Schu 4)</name>
    <dbReference type="NCBI Taxonomy" id="177416"/>
    <lineage>
        <taxon>Bacteria</taxon>
        <taxon>Pseudomonadati</taxon>
        <taxon>Pseudomonadota</taxon>
        <taxon>Gammaproteobacteria</taxon>
        <taxon>Thiotrichales</taxon>
        <taxon>Francisellaceae</taxon>
        <taxon>Francisella</taxon>
    </lineage>
</organism>
<comment type="function">
    <text evidence="1">Catalyzes the formation of S-adenosylmethionine (AdoMet) from methionine and ATP. The overall synthetic reaction is composed of two sequential steps, AdoMet formation and the subsequent tripolyphosphate hydrolysis which occurs prior to release of AdoMet from the enzyme.</text>
</comment>
<comment type="catalytic activity">
    <reaction evidence="1">
        <text>L-methionine + ATP + H2O = S-adenosyl-L-methionine + phosphate + diphosphate</text>
        <dbReference type="Rhea" id="RHEA:21080"/>
        <dbReference type="ChEBI" id="CHEBI:15377"/>
        <dbReference type="ChEBI" id="CHEBI:30616"/>
        <dbReference type="ChEBI" id="CHEBI:33019"/>
        <dbReference type="ChEBI" id="CHEBI:43474"/>
        <dbReference type="ChEBI" id="CHEBI:57844"/>
        <dbReference type="ChEBI" id="CHEBI:59789"/>
        <dbReference type="EC" id="2.5.1.6"/>
    </reaction>
</comment>
<comment type="cofactor">
    <cofactor evidence="1">
        <name>Mg(2+)</name>
        <dbReference type="ChEBI" id="CHEBI:18420"/>
    </cofactor>
    <text evidence="1">Binds 2 divalent ions per subunit.</text>
</comment>
<comment type="cofactor">
    <cofactor evidence="1">
        <name>K(+)</name>
        <dbReference type="ChEBI" id="CHEBI:29103"/>
    </cofactor>
    <text evidence="1">Binds 1 potassium ion per subunit.</text>
</comment>
<comment type="pathway">
    <text evidence="1">Amino-acid biosynthesis; S-adenosyl-L-methionine biosynthesis; S-adenosyl-L-methionine from L-methionine: step 1/1.</text>
</comment>
<comment type="subunit">
    <text evidence="1">Homotetramer; dimer of dimers.</text>
</comment>
<comment type="subcellular location">
    <subcellularLocation>
        <location evidence="1">Cytoplasm</location>
    </subcellularLocation>
</comment>
<comment type="similarity">
    <text evidence="1">Belongs to the AdoMet synthase family.</text>
</comment>
<feature type="chain" id="PRO_0000174523" description="S-adenosylmethionine synthase">
    <location>
        <begin position="1"/>
        <end position="386"/>
    </location>
</feature>
<feature type="region of interest" description="Flexible loop" evidence="1">
    <location>
        <begin position="100"/>
        <end position="110"/>
    </location>
</feature>
<feature type="binding site" description="in other chain" evidence="1">
    <location>
        <position position="16"/>
    </location>
    <ligand>
        <name>ATP</name>
        <dbReference type="ChEBI" id="CHEBI:30616"/>
        <note>ligand shared between two neighboring subunits</note>
    </ligand>
</feature>
<feature type="binding site" evidence="1">
    <location>
        <position position="18"/>
    </location>
    <ligand>
        <name>Mg(2+)</name>
        <dbReference type="ChEBI" id="CHEBI:18420"/>
    </ligand>
</feature>
<feature type="binding site" evidence="1">
    <location>
        <position position="44"/>
    </location>
    <ligand>
        <name>K(+)</name>
        <dbReference type="ChEBI" id="CHEBI:29103"/>
    </ligand>
</feature>
<feature type="binding site" description="in other chain" evidence="1">
    <location>
        <position position="57"/>
    </location>
    <ligand>
        <name>L-methionine</name>
        <dbReference type="ChEBI" id="CHEBI:57844"/>
        <note>ligand shared between two neighboring subunits</note>
    </ligand>
</feature>
<feature type="binding site" description="in other chain" evidence="1">
    <location>
        <position position="100"/>
    </location>
    <ligand>
        <name>L-methionine</name>
        <dbReference type="ChEBI" id="CHEBI:57844"/>
        <note>ligand shared between two neighboring subunits</note>
    </ligand>
</feature>
<feature type="binding site" description="in other chain" evidence="1">
    <location>
        <begin position="165"/>
        <end position="167"/>
    </location>
    <ligand>
        <name>ATP</name>
        <dbReference type="ChEBI" id="CHEBI:30616"/>
        <note>ligand shared between two neighboring subunits</note>
    </ligand>
</feature>
<feature type="binding site" evidence="1">
    <location>
        <position position="240"/>
    </location>
    <ligand>
        <name>ATP</name>
        <dbReference type="ChEBI" id="CHEBI:30616"/>
        <note>ligand shared between two neighboring subunits</note>
    </ligand>
</feature>
<feature type="binding site" evidence="1">
    <location>
        <position position="240"/>
    </location>
    <ligand>
        <name>L-methionine</name>
        <dbReference type="ChEBI" id="CHEBI:57844"/>
        <note>ligand shared between two neighboring subunits</note>
    </ligand>
</feature>
<feature type="binding site" description="in other chain" evidence="1">
    <location>
        <begin position="246"/>
        <end position="247"/>
    </location>
    <ligand>
        <name>ATP</name>
        <dbReference type="ChEBI" id="CHEBI:30616"/>
        <note>ligand shared between two neighboring subunits</note>
    </ligand>
</feature>
<feature type="binding site" evidence="1">
    <location>
        <position position="263"/>
    </location>
    <ligand>
        <name>ATP</name>
        <dbReference type="ChEBI" id="CHEBI:30616"/>
        <note>ligand shared between two neighboring subunits</note>
    </ligand>
</feature>
<feature type="binding site" evidence="1">
    <location>
        <position position="267"/>
    </location>
    <ligand>
        <name>ATP</name>
        <dbReference type="ChEBI" id="CHEBI:30616"/>
        <note>ligand shared between two neighboring subunits</note>
    </ligand>
</feature>
<feature type="binding site" description="in other chain" evidence="1">
    <location>
        <position position="271"/>
    </location>
    <ligand>
        <name>L-methionine</name>
        <dbReference type="ChEBI" id="CHEBI:57844"/>
        <note>ligand shared between two neighboring subunits</note>
    </ligand>
</feature>
<evidence type="ECO:0000255" key="1">
    <source>
        <dbReference type="HAMAP-Rule" id="MF_00086"/>
    </source>
</evidence>
<accession>Q5NIC7</accession>
<dbReference type="EC" id="2.5.1.6" evidence="1"/>
<dbReference type="EMBL" id="AJ749949">
    <property type="protein sequence ID" value="CAG44782.1"/>
    <property type="molecule type" value="Genomic_DNA"/>
</dbReference>
<dbReference type="RefSeq" id="WP_003019918.1">
    <property type="nucleotide sequence ID" value="NC_006570.2"/>
</dbReference>
<dbReference type="RefSeq" id="YP_169215.1">
    <property type="nucleotide sequence ID" value="NC_006570.2"/>
</dbReference>
<dbReference type="SMR" id="Q5NIC7"/>
<dbReference type="STRING" id="177416.FTT_0149c"/>
<dbReference type="DNASU" id="3190826"/>
<dbReference type="EnsemblBacteria" id="CAG44782">
    <property type="protein sequence ID" value="CAG44782"/>
    <property type="gene ID" value="FTT_0149c"/>
</dbReference>
<dbReference type="KEGG" id="ftu:FTT_0149c"/>
<dbReference type="eggNOG" id="COG0192">
    <property type="taxonomic scope" value="Bacteria"/>
</dbReference>
<dbReference type="OrthoDB" id="9801686at2"/>
<dbReference type="UniPathway" id="UPA00315">
    <property type="reaction ID" value="UER00080"/>
</dbReference>
<dbReference type="Proteomes" id="UP000001174">
    <property type="component" value="Chromosome"/>
</dbReference>
<dbReference type="GO" id="GO:0005737">
    <property type="term" value="C:cytoplasm"/>
    <property type="evidence" value="ECO:0007669"/>
    <property type="project" value="UniProtKB-SubCell"/>
</dbReference>
<dbReference type="GO" id="GO:0005524">
    <property type="term" value="F:ATP binding"/>
    <property type="evidence" value="ECO:0007669"/>
    <property type="project" value="UniProtKB-UniRule"/>
</dbReference>
<dbReference type="GO" id="GO:0000287">
    <property type="term" value="F:magnesium ion binding"/>
    <property type="evidence" value="ECO:0007669"/>
    <property type="project" value="UniProtKB-UniRule"/>
</dbReference>
<dbReference type="GO" id="GO:0004478">
    <property type="term" value="F:methionine adenosyltransferase activity"/>
    <property type="evidence" value="ECO:0007669"/>
    <property type="project" value="UniProtKB-UniRule"/>
</dbReference>
<dbReference type="GO" id="GO:0006730">
    <property type="term" value="P:one-carbon metabolic process"/>
    <property type="evidence" value="ECO:0007669"/>
    <property type="project" value="UniProtKB-KW"/>
</dbReference>
<dbReference type="GO" id="GO:0006556">
    <property type="term" value="P:S-adenosylmethionine biosynthetic process"/>
    <property type="evidence" value="ECO:0007669"/>
    <property type="project" value="UniProtKB-UniRule"/>
</dbReference>
<dbReference type="CDD" id="cd18079">
    <property type="entry name" value="S-AdoMet_synt"/>
    <property type="match status" value="1"/>
</dbReference>
<dbReference type="FunFam" id="3.30.300.10:FF:000003">
    <property type="entry name" value="S-adenosylmethionine synthase"/>
    <property type="match status" value="1"/>
</dbReference>
<dbReference type="Gene3D" id="3.30.300.10">
    <property type="match status" value="3"/>
</dbReference>
<dbReference type="HAMAP" id="MF_00086">
    <property type="entry name" value="S_AdoMet_synth1"/>
    <property type="match status" value="1"/>
</dbReference>
<dbReference type="InterPro" id="IPR022631">
    <property type="entry name" value="ADOMET_SYNTHASE_CS"/>
</dbReference>
<dbReference type="InterPro" id="IPR022630">
    <property type="entry name" value="S-AdoMet_synt_C"/>
</dbReference>
<dbReference type="InterPro" id="IPR022629">
    <property type="entry name" value="S-AdoMet_synt_central"/>
</dbReference>
<dbReference type="InterPro" id="IPR022628">
    <property type="entry name" value="S-AdoMet_synt_N"/>
</dbReference>
<dbReference type="InterPro" id="IPR002133">
    <property type="entry name" value="S-AdoMet_synthetase"/>
</dbReference>
<dbReference type="InterPro" id="IPR022636">
    <property type="entry name" value="S-AdoMet_synthetase_sfam"/>
</dbReference>
<dbReference type="NCBIfam" id="TIGR01034">
    <property type="entry name" value="metK"/>
    <property type="match status" value="1"/>
</dbReference>
<dbReference type="PANTHER" id="PTHR11964">
    <property type="entry name" value="S-ADENOSYLMETHIONINE SYNTHETASE"/>
    <property type="match status" value="1"/>
</dbReference>
<dbReference type="Pfam" id="PF02773">
    <property type="entry name" value="S-AdoMet_synt_C"/>
    <property type="match status" value="1"/>
</dbReference>
<dbReference type="Pfam" id="PF02772">
    <property type="entry name" value="S-AdoMet_synt_M"/>
    <property type="match status" value="1"/>
</dbReference>
<dbReference type="Pfam" id="PF00438">
    <property type="entry name" value="S-AdoMet_synt_N"/>
    <property type="match status" value="1"/>
</dbReference>
<dbReference type="PIRSF" id="PIRSF000497">
    <property type="entry name" value="MAT"/>
    <property type="match status" value="1"/>
</dbReference>
<dbReference type="SUPFAM" id="SSF55973">
    <property type="entry name" value="S-adenosylmethionine synthetase"/>
    <property type="match status" value="3"/>
</dbReference>
<dbReference type="PROSITE" id="PS00376">
    <property type="entry name" value="ADOMET_SYNTHASE_1"/>
    <property type="match status" value="1"/>
</dbReference>
<dbReference type="PROSITE" id="PS00377">
    <property type="entry name" value="ADOMET_SYNTHASE_2"/>
    <property type="match status" value="1"/>
</dbReference>
<proteinExistence type="inferred from homology"/>
<gene>
    <name evidence="1" type="primary">metK</name>
    <name type="ordered locus">FTT_0149c</name>
</gene>
<name>METK_FRATT</name>